<gene>
    <name evidence="1" type="primary">aroK</name>
    <name type="ordered locus">Spro_4605</name>
</gene>
<protein>
    <recommendedName>
        <fullName evidence="1">Shikimate kinase 1</fullName>
        <shortName evidence="1">SK 1</shortName>
        <ecNumber evidence="1">2.7.1.71</ecNumber>
    </recommendedName>
</protein>
<accession>A8GKQ8</accession>
<sequence>MAEKRNIFLVGPMGAGKSTIGRQLAQQLNMEFFDSDQEIERRTGADVGWVFDVEGEEGFRDREEKVINELTEKQGIVLATGGGSVKSRETRNRLSARGVVVYLETTIEKQLARTQRDKKRPLLQVDSPPREVLEALAKERNPLYEEIADVTIRTDDQSAKVVANQIINMLESN</sequence>
<dbReference type="EC" id="2.7.1.71" evidence="1"/>
<dbReference type="EMBL" id="CP000826">
    <property type="protein sequence ID" value="ABV43698.1"/>
    <property type="molecule type" value="Genomic_DNA"/>
</dbReference>
<dbReference type="SMR" id="A8GKQ8"/>
<dbReference type="STRING" id="399741.Spro_4605"/>
<dbReference type="KEGG" id="spe:Spro_4605"/>
<dbReference type="eggNOG" id="COG0703">
    <property type="taxonomic scope" value="Bacteria"/>
</dbReference>
<dbReference type="HOGENOM" id="CLU_057607_2_2_6"/>
<dbReference type="OrthoDB" id="9800332at2"/>
<dbReference type="UniPathway" id="UPA00053">
    <property type="reaction ID" value="UER00088"/>
</dbReference>
<dbReference type="GO" id="GO:0005829">
    <property type="term" value="C:cytosol"/>
    <property type="evidence" value="ECO:0007669"/>
    <property type="project" value="TreeGrafter"/>
</dbReference>
<dbReference type="GO" id="GO:0005524">
    <property type="term" value="F:ATP binding"/>
    <property type="evidence" value="ECO:0007669"/>
    <property type="project" value="UniProtKB-UniRule"/>
</dbReference>
<dbReference type="GO" id="GO:0000287">
    <property type="term" value="F:magnesium ion binding"/>
    <property type="evidence" value="ECO:0007669"/>
    <property type="project" value="UniProtKB-UniRule"/>
</dbReference>
<dbReference type="GO" id="GO:0004765">
    <property type="term" value="F:shikimate kinase activity"/>
    <property type="evidence" value="ECO:0007669"/>
    <property type="project" value="UniProtKB-UniRule"/>
</dbReference>
<dbReference type="GO" id="GO:0008652">
    <property type="term" value="P:amino acid biosynthetic process"/>
    <property type="evidence" value="ECO:0007669"/>
    <property type="project" value="UniProtKB-KW"/>
</dbReference>
<dbReference type="GO" id="GO:0009073">
    <property type="term" value="P:aromatic amino acid family biosynthetic process"/>
    <property type="evidence" value="ECO:0007669"/>
    <property type="project" value="UniProtKB-KW"/>
</dbReference>
<dbReference type="GO" id="GO:0009423">
    <property type="term" value="P:chorismate biosynthetic process"/>
    <property type="evidence" value="ECO:0007669"/>
    <property type="project" value="UniProtKB-UniRule"/>
</dbReference>
<dbReference type="CDD" id="cd00464">
    <property type="entry name" value="SK"/>
    <property type="match status" value="1"/>
</dbReference>
<dbReference type="FunFam" id="3.40.50.300:FF:000099">
    <property type="entry name" value="Shikimate kinase 1"/>
    <property type="match status" value="1"/>
</dbReference>
<dbReference type="Gene3D" id="3.40.50.300">
    <property type="entry name" value="P-loop containing nucleotide triphosphate hydrolases"/>
    <property type="match status" value="1"/>
</dbReference>
<dbReference type="HAMAP" id="MF_00109">
    <property type="entry name" value="Shikimate_kinase"/>
    <property type="match status" value="1"/>
</dbReference>
<dbReference type="InterPro" id="IPR027417">
    <property type="entry name" value="P-loop_NTPase"/>
</dbReference>
<dbReference type="InterPro" id="IPR031322">
    <property type="entry name" value="Shikimate/glucono_kinase"/>
</dbReference>
<dbReference type="InterPro" id="IPR000623">
    <property type="entry name" value="Shikimate_kinase/TSH1"/>
</dbReference>
<dbReference type="InterPro" id="IPR023000">
    <property type="entry name" value="Shikimate_kinase_CS"/>
</dbReference>
<dbReference type="NCBIfam" id="NF003456">
    <property type="entry name" value="PRK05057.1"/>
    <property type="match status" value="1"/>
</dbReference>
<dbReference type="PANTHER" id="PTHR21087">
    <property type="entry name" value="SHIKIMATE KINASE"/>
    <property type="match status" value="1"/>
</dbReference>
<dbReference type="PANTHER" id="PTHR21087:SF16">
    <property type="entry name" value="SHIKIMATE KINASE 1, CHLOROPLASTIC"/>
    <property type="match status" value="1"/>
</dbReference>
<dbReference type="Pfam" id="PF01202">
    <property type="entry name" value="SKI"/>
    <property type="match status" value="1"/>
</dbReference>
<dbReference type="PRINTS" id="PR01100">
    <property type="entry name" value="SHIKIMTKNASE"/>
</dbReference>
<dbReference type="SUPFAM" id="SSF52540">
    <property type="entry name" value="P-loop containing nucleoside triphosphate hydrolases"/>
    <property type="match status" value="1"/>
</dbReference>
<dbReference type="PROSITE" id="PS01128">
    <property type="entry name" value="SHIKIMATE_KINASE"/>
    <property type="match status" value="1"/>
</dbReference>
<proteinExistence type="inferred from homology"/>
<evidence type="ECO:0000255" key="1">
    <source>
        <dbReference type="HAMAP-Rule" id="MF_00109"/>
    </source>
</evidence>
<comment type="function">
    <text evidence="1">Catalyzes the specific phosphorylation of the 3-hydroxyl group of shikimic acid using ATP as a cosubstrate.</text>
</comment>
<comment type="catalytic activity">
    <reaction evidence="1">
        <text>shikimate + ATP = 3-phosphoshikimate + ADP + H(+)</text>
        <dbReference type="Rhea" id="RHEA:13121"/>
        <dbReference type="ChEBI" id="CHEBI:15378"/>
        <dbReference type="ChEBI" id="CHEBI:30616"/>
        <dbReference type="ChEBI" id="CHEBI:36208"/>
        <dbReference type="ChEBI" id="CHEBI:145989"/>
        <dbReference type="ChEBI" id="CHEBI:456216"/>
        <dbReference type="EC" id="2.7.1.71"/>
    </reaction>
</comment>
<comment type="cofactor">
    <cofactor evidence="1">
        <name>Mg(2+)</name>
        <dbReference type="ChEBI" id="CHEBI:18420"/>
    </cofactor>
    <text evidence="1">Binds 1 Mg(2+) ion per subunit.</text>
</comment>
<comment type="pathway">
    <text evidence="1">Metabolic intermediate biosynthesis; chorismate biosynthesis; chorismate from D-erythrose 4-phosphate and phosphoenolpyruvate: step 5/7.</text>
</comment>
<comment type="subunit">
    <text evidence="1">Monomer.</text>
</comment>
<comment type="subcellular location">
    <subcellularLocation>
        <location evidence="1">Cytoplasm</location>
    </subcellularLocation>
</comment>
<comment type="similarity">
    <text evidence="1">Belongs to the shikimate kinase family.</text>
</comment>
<name>AROK_SERP5</name>
<organism>
    <name type="scientific">Serratia proteamaculans (strain 568)</name>
    <dbReference type="NCBI Taxonomy" id="399741"/>
    <lineage>
        <taxon>Bacteria</taxon>
        <taxon>Pseudomonadati</taxon>
        <taxon>Pseudomonadota</taxon>
        <taxon>Gammaproteobacteria</taxon>
        <taxon>Enterobacterales</taxon>
        <taxon>Yersiniaceae</taxon>
        <taxon>Serratia</taxon>
    </lineage>
</organism>
<feature type="chain" id="PRO_1000057726" description="Shikimate kinase 1">
    <location>
        <begin position="1"/>
        <end position="173"/>
    </location>
</feature>
<feature type="binding site" evidence="1">
    <location>
        <begin position="14"/>
        <end position="19"/>
    </location>
    <ligand>
        <name>ATP</name>
        <dbReference type="ChEBI" id="CHEBI:30616"/>
    </ligand>
</feature>
<feature type="binding site" evidence="1">
    <location>
        <position position="18"/>
    </location>
    <ligand>
        <name>Mg(2+)</name>
        <dbReference type="ChEBI" id="CHEBI:18420"/>
    </ligand>
</feature>
<feature type="binding site" evidence="1">
    <location>
        <position position="36"/>
    </location>
    <ligand>
        <name>substrate</name>
    </ligand>
</feature>
<feature type="binding site" evidence="1">
    <location>
        <position position="60"/>
    </location>
    <ligand>
        <name>substrate</name>
    </ligand>
</feature>
<feature type="binding site" evidence="1">
    <location>
        <position position="82"/>
    </location>
    <ligand>
        <name>substrate</name>
    </ligand>
</feature>
<feature type="binding site" evidence="1">
    <location>
        <position position="120"/>
    </location>
    <ligand>
        <name>ATP</name>
        <dbReference type="ChEBI" id="CHEBI:30616"/>
    </ligand>
</feature>
<feature type="binding site" evidence="1">
    <location>
        <position position="140"/>
    </location>
    <ligand>
        <name>substrate</name>
    </ligand>
</feature>
<feature type="binding site" evidence="1">
    <location>
        <position position="157"/>
    </location>
    <ligand>
        <name>ATP</name>
        <dbReference type="ChEBI" id="CHEBI:30616"/>
    </ligand>
</feature>
<keyword id="KW-0028">Amino-acid biosynthesis</keyword>
<keyword id="KW-0057">Aromatic amino acid biosynthesis</keyword>
<keyword id="KW-0067">ATP-binding</keyword>
<keyword id="KW-0963">Cytoplasm</keyword>
<keyword id="KW-0418">Kinase</keyword>
<keyword id="KW-0460">Magnesium</keyword>
<keyword id="KW-0479">Metal-binding</keyword>
<keyword id="KW-0547">Nucleotide-binding</keyword>
<keyword id="KW-0808">Transferase</keyword>
<reference key="1">
    <citation type="submission" date="2007-09" db="EMBL/GenBank/DDBJ databases">
        <title>Complete sequence of chromosome of Serratia proteamaculans 568.</title>
        <authorList>
            <consortium name="US DOE Joint Genome Institute"/>
            <person name="Copeland A."/>
            <person name="Lucas S."/>
            <person name="Lapidus A."/>
            <person name="Barry K."/>
            <person name="Glavina del Rio T."/>
            <person name="Dalin E."/>
            <person name="Tice H."/>
            <person name="Pitluck S."/>
            <person name="Chain P."/>
            <person name="Malfatti S."/>
            <person name="Shin M."/>
            <person name="Vergez L."/>
            <person name="Schmutz J."/>
            <person name="Larimer F."/>
            <person name="Land M."/>
            <person name="Hauser L."/>
            <person name="Kyrpides N."/>
            <person name="Kim E."/>
            <person name="Taghavi S."/>
            <person name="Newman L."/>
            <person name="Vangronsveld J."/>
            <person name="van der Lelie D."/>
            <person name="Richardson P."/>
        </authorList>
    </citation>
    <scope>NUCLEOTIDE SEQUENCE [LARGE SCALE GENOMIC DNA]</scope>
    <source>
        <strain>568</strain>
    </source>
</reference>